<proteinExistence type="inferred from homology"/>
<reference key="1">
    <citation type="journal article" date="2008" name="DNA Res.">
        <title>Complete genome sequence and comparative analysis of the wild-type commensal Escherichia coli strain SE11 isolated from a healthy adult.</title>
        <authorList>
            <person name="Oshima K."/>
            <person name="Toh H."/>
            <person name="Ogura Y."/>
            <person name="Sasamoto H."/>
            <person name="Morita H."/>
            <person name="Park S.-H."/>
            <person name="Ooka T."/>
            <person name="Iyoda S."/>
            <person name="Taylor T.D."/>
            <person name="Hayashi T."/>
            <person name="Itoh K."/>
            <person name="Hattori M."/>
        </authorList>
    </citation>
    <scope>NUCLEOTIDE SEQUENCE [LARGE SCALE GENOMIC DNA]</scope>
    <source>
        <strain>SE11</strain>
    </source>
</reference>
<sequence>MTFCYPCRAFALLTRGFTSFMSGWPRIYYKLLNLPLSILVKSKSIPADPAPELGLDTSRPIMYVLPYNSKADLLTLRAQCLAHDLPDPLEPLEIDGTLLPRYVFIHGGPRVFTYYTPKEESIKLFHDYLDLHRSNPNLDVQMVPVSVMFGRAPGREKGEVNPPLRMLNGVQKFFAVLWLGRDSFVRFSPSVSLRRMADEHGTDKTIAQKLARVARMHFARQRLAAVGPRLPARQDLFNKLLASRAIAKAVEDEARSKKISHEKAQQNAIALMEEIAANFSYEMIRLTDRILGFTWNRLYQGINVHNAERVRQLAHDGHELVYVPCHRSHMDYLLLSYVLYHQGLVPPHIAAGINLNFWPAGPIFRRLGAFFIRRTFKGNKLYSTVFREYLGELFSRGYSVEYFVEGGRSRTGRLLDPKTGTLSMTIQAMLRGGTRPITLIPIYIGYEHVMEVGTYAKELRGATKEKESLPQMLRGLSKLRNLGQGYVNFGEPMPLMTYLNQHVPDWRESIDPIEAVRPAWLTPTVNNIAADLMVRINNAGAANAMNLCCTALLASRQRSLTREQLTEQLNCYLDLMRNVPYSTDSTVPSASASELIDHALQMNKFEVEKDTIGDIIILPREQAVLMTYYRNNIAHMLVLPSLMAAIVTQHRHISRDVLMEHVNVLYPMLKAELFLRWDRDELPDVIDALANEMQRQGLITLQDDELHINPAHSRTLQLLAAGARETLQRYAITFWLLSANPSINRGTLEKESRTVAQRLSVLHGINAPEFFDKAVFSSLVLTLRDEGYISDSGDAEPAETMKVYQLLAELITSDVRLTIESATQGEG</sequence>
<keyword id="KW-0012">Acyltransferase</keyword>
<keyword id="KW-0997">Cell inner membrane</keyword>
<keyword id="KW-1003">Cell membrane</keyword>
<keyword id="KW-0444">Lipid biosynthesis</keyword>
<keyword id="KW-0443">Lipid metabolism</keyword>
<keyword id="KW-0472">Membrane</keyword>
<keyword id="KW-0594">Phospholipid biosynthesis</keyword>
<keyword id="KW-1208">Phospholipid metabolism</keyword>
<keyword id="KW-0808">Transferase</keyword>
<feature type="chain" id="PRO_1000123081" description="Glycerol-3-phosphate acyltransferase">
    <location>
        <begin position="1"/>
        <end position="827"/>
    </location>
</feature>
<feature type="short sequence motif" description="HXXXXD motif">
    <location>
        <begin position="325"/>
        <end position="330"/>
    </location>
</feature>
<accession>B6I5Q6</accession>
<gene>
    <name evidence="1" type="primary">plsB</name>
    <name type="ordered locus">ECSE_4333</name>
</gene>
<evidence type="ECO:0000255" key="1">
    <source>
        <dbReference type="HAMAP-Rule" id="MF_00393"/>
    </source>
</evidence>
<organism>
    <name type="scientific">Escherichia coli (strain SE11)</name>
    <dbReference type="NCBI Taxonomy" id="409438"/>
    <lineage>
        <taxon>Bacteria</taxon>
        <taxon>Pseudomonadati</taxon>
        <taxon>Pseudomonadota</taxon>
        <taxon>Gammaproteobacteria</taxon>
        <taxon>Enterobacterales</taxon>
        <taxon>Enterobacteriaceae</taxon>
        <taxon>Escherichia</taxon>
    </lineage>
</organism>
<name>PLSB_ECOSE</name>
<protein>
    <recommendedName>
        <fullName evidence="1">Glycerol-3-phosphate acyltransferase</fullName>
        <shortName evidence="1">GPAT</shortName>
        <ecNumber evidence="1">2.3.1.15</ecNumber>
    </recommendedName>
</protein>
<comment type="catalytic activity">
    <reaction evidence="1">
        <text>sn-glycerol 3-phosphate + an acyl-CoA = a 1-acyl-sn-glycero-3-phosphate + CoA</text>
        <dbReference type="Rhea" id="RHEA:15325"/>
        <dbReference type="ChEBI" id="CHEBI:57287"/>
        <dbReference type="ChEBI" id="CHEBI:57597"/>
        <dbReference type="ChEBI" id="CHEBI:57970"/>
        <dbReference type="ChEBI" id="CHEBI:58342"/>
        <dbReference type="EC" id="2.3.1.15"/>
    </reaction>
</comment>
<comment type="pathway">
    <text evidence="1">Phospholipid metabolism; CDP-diacylglycerol biosynthesis; CDP-diacylglycerol from sn-glycerol 3-phosphate: step 1/3.</text>
</comment>
<comment type="subcellular location">
    <subcellularLocation>
        <location evidence="1">Cell inner membrane</location>
        <topology evidence="1">Peripheral membrane protein</topology>
        <orientation evidence="1">Cytoplasmic side</orientation>
    </subcellularLocation>
</comment>
<comment type="domain">
    <text evidence="1">The HXXXXD motif is essential for acyltransferase activity and may constitute the binding site for the phosphate moiety of the glycerol-3-phosphate.</text>
</comment>
<comment type="similarity">
    <text evidence="1">Belongs to the GPAT/DAPAT family.</text>
</comment>
<dbReference type="EC" id="2.3.1.15" evidence="1"/>
<dbReference type="EMBL" id="AP009240">
    <property type="protein sequence ID" value="BAG79857.1"/>
    <property type="molecule type" value="Genomic_DNA"/>
</dbReference>
<dbReference type="SMR" id="B6I5Q6"/>
<dbReference type="KEGG" id="ecy:ECSE_4333"/>
<dbReference type="HOGENOM" id="CLU_015407_0_0_6"/>
<dbReference type="UniPathway" id="UPA00557">
    <property type="reaction ID" value="UER00612"/>
</dbReference>
<dbReference type="Proteomes" id="UP000008199">
    <property type="component" value="Chromosome"/>
</dbReference>
<dbReference type="GO" id="GO:0005886">
    <property type="term" value="C:plasma membrane"/>
    <property type="evidence" value="ECO:0007669"/>
    <property type="project" value="UniProtKB-SubCell"/>
</dbReference>
<dbReference type="GO" id="GO:0004366">
    <property type="term" value="F:glycerol-3-phosphate O-acyltransferase activity"/>
    <property type="evidence" value="ECO:0007669"/>
    <property type="project" value="UniProtKB-UniRule"/>
</dbReference>
<dbReference type="GO" id="GO:0016024">
    <property type="term" value="P:CDP-diacylglycerol biosynthetic process"/>
    <property type="evidence" value="ECO:0007669"/>
    <property type="project" value="UniProtKB-UniRule"/>
</dbReference>
<dbReference type="GO" id="GO:0006631">
    <property type="term" value="P:fatty acid metabolic process"/>
    <property type="evidence" value="ECO:0007669"/>
    <property type="project" value="TreeGrafter"/>
</dbReference>
<dbReference type="CDD" id="cd07993">
    <property type="entry name" value="LPLAT_DHAPAT-like"/>
    <property type="match status" value="1"/>
</dbReference>
<dbReference type="HAMAP" id="MF_00393">
    <property type="entry name" value="Glyc3P_acyltrans"/>
    <property type="match status" value="1"/>
</dbReference>
<dbReference type="InterPro" id="IPR022284">
    <property type="entry name" value="GPAT/DHAPAT"/>
</dbReference>
<dbReference type="InterPro" id="IPR045520">
    <property type="entry name" value="GPAT/DHAPAT_C"/>
</dbReference>
<dbReference type="InterPro" id="IPR041728">
    <property type="entry name" value="GPAT/DHAPAT_LPLAT"/>
</dbReference>
<dbReference type="InterPro" id="IPR028354">
    <property type="entry name" value="GPAT_PlsB"/>
</dbReference>
<dbReference type="InterPro" id="IPR002123">
    <property type="entry name" value="Plipid/glycerol_acylTrfase"/>
</dbReference>
<dbReference type="NCBIfam" id="TIGR03703">
    <property type="entry name" value="plsB"/>
    <property type="match status" value="1"/>
</dbReference>
<dbReference type="NCBIfam" id="NF003441">
    <property type="entry name" value="PRK04974.1"/>
    <property type="match status" value="1"/>
</dbReference>
<dbReference type="PANTHER" id="PTHR12563:SF17">
    <property type="entry name" value="DIHYDROXYACETONE PHOSPHATE ACYLTRANSFERASE"/>
    <property type="match status" value="1"/>
</dbReference>
<dbReference type="PANTHER" id="PTHR12563">
    <property type="entry name" value="GLYCEROL-3-PHOSPHATE ACYLTRANSFERASE"/>
    <property type="match status" value="1"/>
</dbReference>
<dbReference type="Pfam" id="PF01553">
    <property type="entry name" value="Acyltransferase"/>
    <property type="match status" value="1"/>
</dbReference>
<dbReference type="Pfam" id="PF19277">
    <property type="entry name" value="GPAT_C"/>
    <property type="match status" value="1"/>
</dbReference>
<dbReference type="PIRSF" id="PIRSF500064">
    <property type="entry name" value="GPAT"/>
    <property type="match status" value="1"/>
</dbReference>
<dbReference type="PIRSF" id="PIRSF000437">
    <property type="entry name" value="GPAT_DHAPAT"/>
    <property type="match status" value="1"/>
</dbReference>
<dbReference type="SMART" id="SM00563">
    <property type="entry name" value="PlsC"/>
    <property type="match status" value="1"/>
</dbReference>
<dbReference type="SUPFAM" id="SSF69593">
    <property type="entry name" value="Glycerol-3-phosphate (1)-acyltransferase"/>
    <property type="match status" value="1"/>
</dbReference>